<proteinExistence type="evidence at protein level"/>
<evidence type="ECO:0000250" key="1"/>
<evidence type="ECO:0000255" key="2"/>
<evidence type="ECO:0000255" key="3">
    <source>
        <dbReference type="PROSITE-ProRule" id="PRU01134"/>
    </source>
</evidence>
<evidence type="ECO:0000256" key="4">
    <source>
        <dbReference type="SAM" id="MobiDB-lite"/>
    </source>
</evidence>
<evidence type="ECO:0000269" key="5">
    <source>
    </source>
</evidence>
<evidence type="ECO:0000305" key="6"/>
<dbReference type="EC" id="4.2.1.1"/>
<dbReference type="EMBL" id="AB252484">
    <property type="protein sequence ID" value="BAF42334.1"/>
    <property type="molecule type" value="mRNA"/>
</dbReference>
<dbReference type="SMR" id="A0ZSF7"/>
<dbReference type="GO" id="GO:0005737">
    <property type="term" value="C:cytoplasm"/>
    <property type="evidence" value="ECO:0007669"/>
    <property type="project" value="TreeGrafter"/>
</dbReference>
<dbReference type="GO" id="GO:0005576">
    <property type="term" value="C:extracellular region"/>
    <property type="evidence" value="ECO:0007669"/>
    <property type="project" value="UniProtKB-KW"/>
</dbReference>
<dbReference type="GO" id="GO:0004089">
    <property type="term" value="F:carbonate dehydratase activity"/>
    <property type="evidence" value="ECO:0007669"/>
    <property type="project" value="UniProtKB-EC"/>
</dbReference>
<dbReference type="GO" id="GO:0008270">
    <property type="term" value="F:zinc ion binding"/>
    <property type="evidence" value="ECO:0007669"/>
    <property type="project" value="InterPro"/>
</dbReference>
<dbReference type="CDD" id="cd00326">
    <property type="entry name" value="alpha_CA"/>
    <property type="match status" value="1"/>
</dbReference>
<dbReference type="Gene3D" id="3.10.200.10">
    <property type="entry name" value="Alpha carbonic anhydrase"/>
    <property type="match status" value="2"/>
</dbReference>
<dbReference type="InterPro" id="IPR001148">
    <property type="entry name" value="CA_dom"/>
</dbReference>
<dbReference type="InterPro" id="IPR036398">
    <property type="entry name" value="CA_dom_sf"/>
</dbReference>
<dbReference type="InterPro" id="IPR023561">
    <property type="entry name" value="Carbonic_anhydrase_a-class"/>
</dbReference>
<dbReference type="InterPro" id="IPR008160">
    <property type="entry name" value="Collagen"/>
</dbReference>
<dbReference type="PANTHER" id="PTHR18952">
    <property type="entry name" value="CARBONIC ANHYDRASE"/>
    <property type="match status" value="1"/>
</dbReference>
<dbReference type="PANTHER" id="PTHR18952:SF141">
    <property type="entry name" value="CARBONIC ANHYDRASE"/>
    <property type="match status" value="1"/>
</dbReference>
<dbReference type="Pfam" id="PF00194">
    <property type="entry name" value="Carb_anhydrase"/>
    <property type="match status" value="2"/>
</dbReference>
<dbReference type="Pfam" id="PF01391">
    <property type="entry name" value="Collagen"/>
    <property type="match status" value="2"/>
</dbReference>
<dbReference type="SMART" id="SM01057">
    <property type="entry name" value="Carb_anhydrase"/>
    <property type="match status" value="1"/>
</dbReference>
<dbReference type="SUPFAM" id="SSF51069">
    <property type="entry name" value="Carbonic anhydrase"/>
    <property type="match status" value="1"/>
</dbReference>
<dbReference type="PROSITE" id="PS51144">
    <property type="entry name" value="ALPHA_CA_2"/>
    <property type="match status" value="1"/>
</dbReference>
<feature type="chain" id="PRO_0000379798" description="Nacrein-like protein C2">
    <location>
        <begin position="1" status="less than"/>
        <end position="415"/>
    </location>
</feature>
<feature type="domain" description="Alpha-carbonic anhydrase" evidence="3">
    <location>
        <begin position="33"/>
        <end position="414"/>
    </location>
</feature>
<feature type="repeat" description="1">
    <location>
        <begin position="225"/>
        <end position="227"/>
    </location>
</feature>
<feature type="repeat" description="2">
    <location>
        <begin position="228"/>
        <end position="230"/>
    </location>
</feature>
<feature type="repeat" description="3">
    <location>
        <begin position="231"/>
        <end position="233"/>
    </location>
</feature>
<feature type="repeat" description="4">
    <location>
        <begin position="234"/>
        <end position="236"/>
    </location>
</feature>
<feature type="repeat" description="5">
    <location>
        <begin position="237"/>
        <end position="239"/>
    </location>
</feature>
<feature type="repeat" description="6">
    <location>
        <begin position="240"/>
        <end position="242"/>
    </location>
</feature>
<feature type="repeat" description="7">
    <location>
        <begin position="243"/>
        <end position="245"/>
    </location>
</feature>
<feature type="repeat" description="8">
    <location>
        <begin position="246"/>
        <end position="248"/>
    </location>
</feature>
<feature type="repeat" description="9">
    <location>
        <begin position="249"/>
        <end position="251"/>
    </location>
</feature>
<feature type="repeat" description="10">
    <location>
        <begin position="252"/>
        <end position="254"/>
    </location>
</feature>
<feature type="repeat" description="11">
    <location>
        <begin position="255"/>
        <end position="257"/>
    </location>
</feature>
<feature type="repeat" description="17">
    <location>
        <begin position="258"/>
        <end position="260"/>
    </location>
</feature>
<feature type="repeat" description="18">
    <location>
        <begin position="261"/>
        <end position="263"/>
    </location>
</feature>
<feature type="repeat" description="19">
    <location>
        <begin position="264"/>
        <end position="266"/>
    </location>
</feature>
<feature type="repeat" description="20">
    <location>
        <begin position="267"/>
        <end position="269"/>
    </location>
</feature>
<feature type="repeat" description="21">
    <location>
        <begin position="270"/>
        <end position="272"/>
    </location>
</feature>
<feature type="repeat" description="22">
    <location>
        <begin position="273"/>
        <end position="275"/>
    </location>
</feature>
<feature type="repeat" description="23">
    <location>
        <begin position="276"/>
        <end position="278"/>
    </location>
</feature>
<feature type="repeat" description="24">
    <location>
        <begin position="279"/>
        <end position="281"/>
    </location>
</feature>
<feature type="repeat" description="25">
    <location>
        <begin position="282"/>
        <end position="284"/>
    </location>
</feature>
<feature type="repeat" description="26">
    <location>
        <begin position="285"/>
        <end position="286"/>
    </location>
</feature>
<feature type="repeat" description="27">
    <location>
        <begin position="288"/>
        <end position="290"/>
    </location>
</feature>
<feature type="region of interest" description="Disordered" evidence="4">
    <location>
        <begin position="201"/>
        <end position="297"/>
    </location>
</feature>
<feature type="region of interest" description="27 X 3 AA approximate tandem repeats of G-X-N">
    <location>
        <begin position="225"/>
        <end position="290"/>
    </location>
</feature>
<feature type="compositionally biased region" description="Basic and acidic residues" evidence="4">
    <location>
        <begin position="207"/>
        <end position="219"/>
    </location>
</feature>
<feature type="compositionally biased region" description="Low complexity" evidence="4">
    <location>
        <begin position="220"/>
        <end position="289"/>
    </location>
</feature>
<feature type="binding site" evidence="3">
    <location>
        <position position="132"/>
    </location>
    <ligand>
        <name>Zn(2+)</name>
        <dbReference type="ChEBI" id="CHEBI:29105"/>
        <note>catalytic</note>
    </ligand>
</feature>
<feature type="binding site" evidence="3">
    <location>
        <position position="134"/>
    </location>
    <ligand>
        <name>Zn(2+)</name>
        <dbReference type="ChEBI" id="CHEBI:29105"/>
        <note>catalytic</note>
    </ligand>
</feature>
<feature type="binding site" evidence="3">
    <location>
        <position position="157"/>
    </location>
    <ligand>
        <name>Zn(2+)</name>
        <dbReference type="ChEBI" id="CHEBI:29105"/>
        <note>catalytic</note>
    </ligand>
</feature>
<feature type="binding site" evidence="1">
    <location>
        <begin position="355"/>
        <end position="356"/>
    </location>
    <ligand>
        <name>substrate</name>
    </ligand>
</feature>
<feature type="glycosylation site" description="N-linked (GlcNAc...) asparagine" evidence="2">
    <location>
        <position position="27"/>
    </location>
</feature>
<feature type="non-terminal residue">
    <location>
        <position position="1"/>
    </location>
</feature>
<comment type="function">
    <text evidence="1 5">Acts as a negative regulator for calcification in the shells of mollusks. May function both as a calcium concentrator and as a carbonic anhydrase required for production of carbonate ions, which are assembled to CaCO(3) at mineralization sites. Is important for shell formation in both the calcitic prismatic layer and the aragonitic nacreous layer (By similarity). Shows inhibitory activity of crystal formation when present in free state but, when attached to the insoluble matrix, may regulate the form and size of aragonite crystal.</text>
</comment>
<comment type="catalytic activity">
    <reaction>
        <text>hydrogencarbonate + H(+) = CO2 + H2O</text>
        <dbReference type="Rhea" id="RHEA:10748"/>
        <dbReference type="ChEBI" id="CHEBI:15377"/>
        <dbReference type="ChEBI" id="CHEBI:15378"/>
        <dbReference type="ChEBI" id="CHEBI:16526"/>
        <dbReference type="ChEBI" id="CHEBI:17544"/>
        <dbReference type="EC" id="4.2.1.1"/>
    </reaction>
</comment>
<comment type="cofactor">
    <cofactor evidence="1">
        <name>Zn(2+)</name>
        <dbReference type="ChEBI" id="CHEBI:29105"/>
    </cofactor>
</comment>
<comment type="subunit">
    <text evidence="1">Homooligomer; disulfide-linked. May also be disulfide-linked to insoluble organic matrix (By similarity).</text>
</comment>
<comment type="subcellular location">
    <subcellularLocation>
        <location evidence="1">Secreted</location>
        <location evidence="1">Extracellular space</location>
        <location evidence="1">Extracellular matrix</location>
    </subcellularLocation>
</comment>
<comment type="tissue specificity">
    <text>Expressed in the mantle.</text>
</comment>
<comment type="miscellaneous">
    <text>Two hypotheses for calcium binding are proposed. Either the Gly-Xaa-Asn repeat domain bind calcium or sulfite and sialic acid provide the necessary negative charge in the N-glycan to promote calcium uptake.</text>
</comment>
<comment type="similarity">
    <text evidence="6">Belongs to the alpha-carbonic anhydrase family.</text>
</comment>
<organism>
    <name type="scientific">Crassostrea nippona</name>
    <name type="common">Iwagaki oyster</name>
    <dbReference type="NCBI Taxonomy" id="121615"/>
    <lineage>
        <taxon>Eukaryota</taxon>
        <taxon>Metazoa</taxon>
        <taxon>Spiralia</taxon>
        <taxon>Lophotrochozoa</taxon>
        <taxon>Mollusca</taxon>
        <taxon>Bivalvia</taxon>
        <taxon>Autobranchia</taxon>
        <taxon>Pteriomorphia</taxon>
        <taxon>Ostreida</taxon>
        <taxon>Ostreoidea</taxon>
        <taxon>Ostreidae</taxon>
        <taxon>Crassostrea</taxon>
    </lineage>
</organism>
<accession>A0ZSF7</accession>
<name>MAC2_CRANI</name>
<keyword id="KW-0106">Calcium</keyword>
<keyword id="KW-1015">Disulfide bond</keyword>
<keyword id="KW-0272">Extracellular matrix</keyword>
<keyword id="KW-0325">Glycoprotein</keyword>
<keyword id="KW-0456">Lyase</keyword>
<keyword id="KW-0479">Metal-binding</keyword>
<keyword id="KW-0677">Repeat</keyword>
<keyword id="KW-0964">Secreted</keyword>
<keyword id="KW-0862">Zinc</keyword>
<sequence length="415" mass="46756">ASMFKHDHYMDNGVRYPNGDGICEQLNETKCDAGFSYDRSICEGPHYWHTISKCFIACGIGQRQSPINIVSYDAKFRQRLPKLKFKPHMEKLKTEVTNHQNRAPEFEPEDGENLYVKLNNLVDGHYKFHNLHVHNGRTRRKGSEHSVNGRFTPMEAHLVFHHDEQTHFEPTRTKLGGAFPGHNDFVVVGVFLEVGDDGFGDEPDDEECKHILKGHHPDNNENGNGDNGNNGYNGDNGNNGDNGNNGYNGDNGNNGVNGNNGYNGDNGNNGDNGNNGENGNNGENGNNGENGHKHGCRVKKAKHLSRILECAYRNDKVREFKKVGEEEGLDVHLTPEMPLPPLKYRHYYTYEGSLTTPPCTESVLWVVQKCHVQVSRRVLHALRNVEGYKDGTTLRKYGTRRPTQKNKVTVYKSFK</sequence>
<protein>
    <recommendedName>
        <fullName>Nacrein-like protein C2</fullName>
        <ecNumber>4.2.1.1</ecNumber>
    </recommendedName>
</protein>
<reference key="1">
    <citation type="journal article" date="2008" name="Mar. Biotechnol.">
        <title>Distribution and function of the nacrein-related proteins inferred from structural analysis.</title>
        <authorList>
            <person name="Norizuki M."/>
            <person name="Samata T."/>
        </authorList>
    </citation>
    <scope>NUCLEOTIDE SEQUENCE [MRNA]</scope>
    <scope>FUNCTION</scope>
    <scope>CRYSTALLIZATION</scope>
    <source>
        <tissue>Gill</tissue>
        <tissue>Mantle</tissue>
    </source>
</reference>